<dbReference type="EMBL" id="BX950851">
    <property type="protein sequence ID" value="CAG76912.1"/>
    <property type="molecule type" value="Genomic_DNA"/>
</dbReference>
<dbReference type="RefSeq" id="WP_005970258.1">
    <property type="nucleotide sequence ID" value="NC_004547.2"/>
</dbReference>
<dbReference type="SMR" id="Q6CZY6"/>
<dbReference type="STRING" id="218491.ECA4015"/>
<dbReference type="GeneID" id="57210679"/>
<dbReference type="KEGG" id="eca:ECA4015"/>
<dbReference type="eggNOG" id="COG0256">
    <property type="taxonomic scope" value="Bacteria"/>
</dbReference>
<dbReference type="HOGENOM" id="CLU_098841_0_1_6"/>
<dbReference type="OrthoDB" id="9810939at2"/>
<dbReference type="Proteomes" id="UP000007966">
    <property type="component" value="Chromosome"/>
</dbReference>
<dbReference type="GO" id="GO:0022625">
    <property type="term" value="C:cytosolic large ribosomal subunit"/>
    <property type="evidence" value="ECO:0007669"/>
    <property type="project" value="TreeGrafter"/>
</dbReference>
<dbReference type="GO" id="GO:0008097">
    <property type="term" value="F:5S rRNA binding"/>
    <property type="evidence" value="ECO:0007669"/>
    <property type="project" value="TreeGrafter"/>
</dbReference>
<dbReference type="GO" id="GO:0003735">
    <property type="term" value="F:structural constituent of ribosome"/>
    <property type="evidence" value="ECO:0007669"/>
    <property type="project" value="InterPro"/>
</dbReference>
<dbReference type="GO" id="GO:0006412">
    <property type="term" value="P:translation"/>
    <property type="evidence" value="ECO:0007669"/>
    <property type="project" value="UniProtKB-UniRule"/>
</dbReference>
<dbReference type="CDD" id="cd00432">
    <property type="entry name" value="Ribosomal_L18_L5e"/>
    <property type="match status" value="1"/>
</dbReference>
<dbReference type="FunFam" id="3.30.420.100:FF:000001">
    <property type="entry name" value="50S ribosomal protein L18"/>
    <property type="match status" value="1"/>
</dbReference>
<dbReference type="Gene3D" id="3.30.420.100">
    <property type="match status" value="1"/>
</dbReference>
<dbReference type="HAMAP" id="MF_01337_B">
    <property type="entry name" value="Ribosomal_uL18_B"/>
    <property type="match status" value="1"/>
</dbReference>
<dbReference type="InterPro" id="IPR004389">
    <property type="entry name" value="Ribosomal_uL18_bac-type"/>
</dbReference>
<dbReference type="InterPro" id="IPR005484">
    <property type="entry name" value="Ribosomal_uL18_bac/euk"/>
</dbReference>
<dbReference type="NCBIfam" id="TIGR00060">
    <property type="entry name" value="L18_bact"/>
    <property type="match status" value="1"/>
</dbReference>
<dbReference type="PANTHER" id="PTHR12899">
    <property type="entry name" value="39S RIBOSOMAL PROTEIN L18, MITOCHONDRIAL"/>
    <property type="match status" value="1"/>
</dbReference>
<dbReference type="PANTHER" id="PTHR12899:SF3">
    <property type="entry name" value="LARGE RIBOSOMAL SUBUNIT PROTEIN UL18M"/>
    <property type="match status" value="1"/>
</dbReference>
<dbReference type="Pfam" id="PF00861">
    <property type="entry name" value="Ribosomal_L18p"/>
    <property type="match status" value="1"/>
</dbReference>
<dbReference type="SUPFAM" id="SSF53137">
    <property type="entry name" value="Translational machinery components"/>
    <property type="match status" value="1"/>
</dbReference>
<proteinExistence type="inferred from homology"/>
<comment type="function">
    <text evidence="1">This is one of the proteins that bind and probably mediate the attachment of the 5S RNA into the large ribosomal subunit, where it forms part of the central protuberance.</text>
</comment>
<comment type="subunit">
    <text evidence="1">Part of the 50S ribosomal subunit; part of the 5S rRNA/L5/L18/L25 subcomplex. Contacts the 5S and 23S rRNAs.</text>
</comment>
<comment type="similarity">
    <text evidence="1">Belongs to the universal ribosomal protein uL18 family.</text>
</comment>
<protein>
    <recommendedName>
        <fullName evidence="1">Large ribosomal subunit protein uL18</fullName>
    </recommendedName>
    <alternativeName>
        <fullName evidence="2">50S ribosomal protein L18</fullName>
    </alternativeName>
</protein>
<gene>
    <name evidence="1" type="primary">rplR</name>
    <name type="ordered locus">ECA4015</name>
</gene>
<reference key="1">
    <citation type="journal article" date="2004" name="Proc. Natl. Acad. Sci. U.S.A.">
        <title>Genome sequence of the enterobacterial phytopathogen Erwinia carotovora subsp. atroseptica and characterization of virulence factors.</title>
        <authorList>
            <person name="Bell K.S."/>
            <person name="Sebaihia M."/>
            <person name="Pritchard L."/>
            <person name="Holden M.T.G."/>
            <person name="Hyman L.J."/>
            <person name="Holeva M.C."/>
            <person name="Thomson N.R."/>
            <person name="Bentley S.D."/>
            <person name="Churcher L.J.C."/>
            <person name="Mungall K."/>
            <person name="Atkin R."/>
            <person name="Bason N."/>
            <person name="Brooks K."/>
            <person name="Chillingworth T."/>
            <person name="Clark K."/>
            <person name="Doggett J."/>
            <person name="Fraser A."/>
            <person name="Hance Z."/>
            <person name="Hauser H."/>
            <person name="Jagels K."/>
            <person name="Moule S."/>
            <person name="Norbertczak H."/>
            <person name="Ormond D."/>
            <person name="Price C."/>
            <person name="Quail M.A."/>
            <person name="Sanders M."/>
            <person name="Walker D."/>
            <person name="Whitehead S."/>
            <person name="Salmond G.P.C."/>
            <person name="Birch P.R.J."/>
            <person name="Parkhill J."/>
            <person name="Toth I.K."/>
        </authorList>
    </citation>
    <scope>NUCLEOTIDE SEQUENCE [LARGE SCALE GENOMIC DNA]</scope>
    <source>
        <strain>SCRI 1043 / ATCC BAA-672</strain>
    </source>
</reference>
<keyword id="KW-1185">Reference proteome</keyword>
<keyword id="KW-0687">Ribonucleoprotein</keyword>
<keyword id="KW-0689">Ribosomal protein</keyword>
<keyword id="KW-0694">RNA-binding</keyword>
<keyword id="KW-0699">rRNA-binding</keyword>
<evidence type="ECO:0000255" key="1">
    <source>
        <dbReference type="HAMAP-Rule" id="MF_01337"/>
    </source>
</evidence>
<evidence type="ECO:0000305" key="2"/>
<feature type="chain" id="PRO_0000131264" description="Large ribosomal subunit protein uL18">
    <location>
        <begin position="1"/>
        <end position="117"/>
    </location>
</feature>
<name>RL18_PECAS</name>
<organism>
    <name type="scientific">Pectobacterium atrosepticum (strain SCRI 1043 / ATCC BAA-672)</name>
    <name type="common">Erwinia carotovora subsp. atroseptica</name>
    <dbReference type="NCBI Taxonomy" id="218491"/>
    <lineage>
        <taxon>Bacteria</taxon>
        <taxon>Pseudomonadati</taxon>
        <taxon>Pseudomonadota</taxon>
        <taxon>Gammaproteobacteria</taxon>
        <taxon>Enterobacterales</taxon>
        <taxon>Pectobacteriaceae</taxon>
        <taxon>Pectobacterium</taxon>
    </lineage>
</organism>
<accession>Q6CZY6</accession>
<sequence length="117" mass="12735">MDKKAARIRRATRARRKLQELGATRLVVHRTPRHIYAQVIAPNGSEVLVAASTVEKAIAEQLKSTGNKDAATAIGKAIAERALEKGIKNVSFDRSGFQYHGRVQALADAAREAGLQF</sequence>